<evidence type="ECO:0000255" key="1">
    <source>
        <dbReference type="HAMAP-Rule" id="MF_01382"/>
    </source>
</evidence>
<evidence type="ECO:0000256" key="2">
    <source>
        <dbReference type="SAM" id="MobiDB-lite"/>
    </source>
</evidence>
<comment type="function">
    <text evidence="1">Part of the Sec protein translocase complex. Interacts with the SecYEG preprotein conducting channel. Has a central role in coupling the hydrolysis of ATP to the transfer of proteins into and across the cell membrane, serving both as a receptor for the preprotein-SecB complex and as an ATP-driven molecular motor driving the stepwise translocation of polypeptide chains across the membrane.</text>
</comment>
<comment type="catalytic activity">
    <reaction evidence="1">
        <text>ATP + H2O + cellular proteinSide 1 = ADP + phosphate + cellular proteinSide 2.</text>
        <dbReference type="EC" id="7.4.2.8"/>
    </reaction>
</comment>
<comment type="cofactor">
    <cofactor evidence="1">
        <name>Zn(2+)</name>
        <dbReference type="ChEBI" id="CHEBI:29105"/>
    </cofactor>
    <text evidence="1">May bind 1 zinc ion per subunit.</text>
</comment>
<comment type="subunit">
    <text evidence="1">Monomer and homodimer. Part of the essential Sec protein translocation apparatus which comprises SecA, SecYEG and auxiliary proteins SecDF-YajC and YidC.</text>
</comment>
<comment type="subcellular location">
    <subcellularLocation>
        <location evidence="1">Cell inner membrane</location>
        <topology evidence="1">Peripheral membrane protein</topology>
        <orientation evidence="1">Cytoplasmic side</orientation>
    </subcellularLocation>
    <subcellularLocation>
        <location evidence="1">Cytoplasm</location>
    </subcellularLocation>
    <text evidence="1">Distribution is 50-50.</text>
</comment>
<comment type="induction">
    <text evidence="1">Repressed under conditions of excess protein secretion capacity and derepressed when protein secretion becomes limiting. This is regulated by SecM.</text>
</comment>
<comment type="similarity">
    <text evidence="1">Belongs to the SecA family.</text>
</comment>
<dbReference type="EC" id="7.4.2.8" evidence="1"/>
<dbReference type="EMBL" id="AE005174">
    <property type="protein sequence ID" value="AAG54402.1"/>
    <property type="molecule type" value="Genomic_DNA"/>
</dbReference>
<dbReference type="EMBL" id="BA000007">
    <property type="protein sequence ID" value="BAB33525.1"/>
    <property type="molecule type" value="Genomic_DNA"/>
</dbReference>
<dbReference type="PIR" id="F85492">
    <property type="entry name" value="F85492"/>
</dbReference>
<dbReference type="PIR" id="F90641">
    <property type="entry name" value="F90641"/>
</dbReference>
<dbReference type="RefSeq" id="NP_308129.1">
    <property type="nucleotide sequence ID" value="NC_002695.1"/>
</dbReference>
<dbReference type="RefSeq" id="WP_000905780.1">
    <property type="nucleotide sequence ID" value="NZ_VOAI01000002.1"/>
</dbReference>
<dbReference type="SMR" id="Q8X996"/>
<dbReference type="STRING" id="155864.Z0108"/>
<dbReference type="GeneID" id="913599"/>
<dbReference type="KEGG" id="ece:Z0108"/>
<dbReference type="KEGG" id="ecs:ECs_0102"/>
<dbReference type="PATRIC" id="fig|386585.9.peg.202"/>
<dbReference type="eggNOG" id="COG0653">
    <property type="taxonomic scope" value="Bacteria"/>
</dbReference>
<dbReference type="HOGENOM" id="CLU_005314_3_0_6"/>
<dbReference type="OMA" id="MVHYDVQ"/>
<dbReference type="Proteomes" id="UP000000558">
    <property type="component" value="Chromosome"/>
</dbReference>
<dbReference type="Proteomes" id="UP000002519">
    <property type="component" value="Chromosome"/>
</dbReference>
<dbReference type="GO" id="GO:0031522">
    <property type="term" value="C:cell envelope Sec protein transport complex"/>
    <property type="evidence" value="ECO:0007669"/>
    <property type="project" value="TreeGrafter"/>
</dbReference>
<dbReference type="GO" id="GO:0005829">
    <property type="term" value="C:cytosol"/>
    <property type="evidence" value="ECO:0007669"/>
    <property type="project" value="TreeGrafter"/>
</dbReference>
<dbReference type="GO" id="GO:0005886">
    <property type="term" value="C:plasma membrane"/>
    <property type="evidence" value="ECO:0007669"/>
    <property type="project" value="UniProtKB-SubCell"/>
</dbReference>
<dbReference type="GO" id="GO:0005524">
    <property type="term" value="F:ATP binding"/>
    <property type="evidence" value="ECO:0007669"/>
    <property type="project" value="UniProtKB-UniRule"/>
</dbReference>
<dbReference type="GO" id="GO:0046872">
    <property type="term" value="F:metal ion binding"/>
    <property type="evidence" value="ECO:0007669"/>
    <property type="project" value="UniProtKB-KW"/>
</dbReference>
<dbReference type="GO" id="GO:0008564">
    <property type="term" value="F:protein-exporting ATPase activity"/>
    <property type="evidence" value="ECO:0007669"/>
    <property type="project" value="UniProtKB-EC"/>
</dbReference>
<dbReference type="GO" id="GO:0065002">
    <property type="term" value="P:intracellular protein transmembrane transport"/>
    <property type="evidence" value="ECO:0007669"/>
    <property type="project" value="UniProtKB-UniRule"/>
</dbReference>
<dbReference type="GO" id="GO:0017038">
    <property type="term" value="P:protein import"/>
    <property type="evidence" value="ECO:0007669"/>
    <property type="project" value="InterPro"/>
</dbReference>
<dbReference type="GO" id="GO:0006605">
    <property type="term" value="P:protein targeting"/>
    <property type="evidence" value="ECO:0007669"/>
    <property type="project" value="UniProtKB-UniRule"/>
</dbReference>
<dbReference type="GO" id="GO:0043952">
    <property type="term" value="P:protein transport by the Sec complex"/>
    <property type="evidence" value="ECO:0007669"/>
    <property type="project" value="TreeGrafter"/>
</dbReference>
<dbReference type="CDD" id="cd17928">
    <property type="entry name" value="DEXDc_SecA"/>
    <property type="match status" value="1"/>
</dbReference>
<dbReference type="CDD" id="cd18803">
    <property type="entry name" value="SF2_C_secA"/>
    <property type="match status" value="1"/>
</dbReference>
<dbReference type="FunFam" id="1.10.3060.10:FF:000001">
    <property type="entry name" value="Preprotein translocase subunit SecA"/>
    <property type="match status" value="1"/>
</dbReference>
<dbReference type="FunFam" id="3.40.50.300:FF:000081">
    <property type="entry name" value="Preprotein translocase subunit SecA"/>
    <property type="match status" value="1"/>
</dbReference>
<dbReference type="FunFam" id="3.40.50.300:FF:000113">
    <property type="entry name" value="Preprotein translocase subunit SecA"/>
    <property type="match status" value="1"/>
</dbReference>
<dbReference type="FunFam" id="3.90.1440.10:FF:000001">
    <property type="entry name" value="Preprotein translocase subunit SecA"/>
    <property type="match status" value="1"/>
</dbReference>
<dbReference type="Gene3D" id="1.10.3060.10">
    <property type="entry name" value="Helical scaffold and wing domains of SecA"/>
    <property type="match status" value="1"/>
</dbReference>
<dbReference type="Gene3D" id="3.40.50.300">
    <property type="entry name" value="P-loop containing nucleotide triphosphate hydrolases"/>
    <property type="match status" value="2"/>
</dbReference>
<dbReference type="Gene3D" id="3.90.1440.10">
    <property type="entry name" value="SecA, preprotein cross-linking domain"/>
    <property type="match status" value="1"/>
</dbReference>
<dbReference type="HAMAP" id="MF_01382">
    <property type="entry name" value="SecA"/>
    <property type="match status" value="1"/>
</dbReference>
<dbReference type="InterPro" id="IPR014001">
    <property type="entry name" value="Helicase_ATP-bd"/>
</dbReference>
<dbReference type="InterPro" id="IPR001650">
    <property type="entry name" value="Helicase_C-like"/>
</dbReference>
<dbReference type="InterPro" id="IPR027417">
    <property type="entry name" value="P-loop_NTPase"/>
</dbReference>
<dbReference type="InterPro" id="IPR004027">
    <property type="entry name" value="SEC_C_motif"/>
</dbReference>
<dbReference type="InterPro" id="IPR000185">
    <property type="entry name" value="SecA"/>
</dbReference>
<dbReference type="InterPro" id="IPR020937">
    <property type="entry name" value="SecA_CS"/>
</dbReference>
<dbReference type="InterPro" id="IPR011115">
    <property type="entry name" value="SecA_DEAD"/>
</dbReference>
<dbReference type="InterPro" id="IPR014018">
    <property type="entry name" value="SecA_motor_DEAD"/>
</dbReference>
<dbReference type="InterPro" id="IPR011130">
    <property type="entry name" value="SecA_preprotein_X-link_dom"/>
</dbReference>
<dbReference type="InterPro" id="IPR044722">
    <property type="entry name" value="SecA_SF2_C"/>
</dbReference>
<dbReference type="InterPro" id="IPR011116">
    <property type="entry name" value="SecA_Wing/Scaffold"/>
</dbReference>
<dbReference type="InterPro" id="IPR036266">
    <property type="entry name" value="SecA_Wing/Scaffold_sf"/>
</dbReference>
<dbReference type="InterPro" id="IPR036670">
    <property type="entry name" value="SecA_X-link_sf"/>
</dbReference>
<dbReference type="NCBIfam" id="NF009538">
    <property type="entry name" value="PRK12904.1"/>
    <property type="match status" value="1"/>
</dbReference>
<dbReference type="NCBIfam" id="TIGR00963">
    <property type="entry name" value="secA"/>
    <property type="match status" value="1"/>
</dbReference>
<dbReference type="PANTHER" id="PTHR30612:SF0">
    <property type="entry name" value="CHLOROPLAST PROTEIN-TRANSPORTING ATPASE"/>
    <property type="match status" value="1"/>
</dbReference>
<dbReference type="PANTHER" id="PTHR30612">
    <property type="entry name" value="SECA INNER MEMBRANE COMPONENT OF SEC PROTEIN SECRETION SYSTEM"/>
    <property type="match status" value="1"/>
</dbReference>
<dbReference type="Pfam" id="PF21090">
    <property type="entry name" value="P-loop_SecA"/>
    <property type="match status" value="1"/>
</dbReference>
<dbReference type="Pfam" id="PF02810">
    <property type="entry name" value="SEC-C"/>
    <property type="match status" value="1"/>
</dbReference>
<dbReference type="Pfam" id="PF07517">
    <property type="entry name" value="SecA_DEAD"/>
    <property type="match status" value="1"/>
</dbReference>
<dbReference type="Pfam" id="PF01043">
    <property type="entry name" value="SecA_PP_bind"/>
    <property type="match status" value="1"/>
</dbReference>
<dbReference type="Pfam" id="PF07516">
    <property type="entry name" value="SecA_SW"/>
    <property type="match status" value="1"/>
</dbReference>
<dbReference type="PRINTS" id="PR00906">
    <property type="entry name" value="SECA"/>
</dbReference>
<dbReference type="SMART" id="SM00957">
    <property type="entry name" value="SecA_DEAD"/>
    <property type="match status" value="1"/>
</dbReference>
<dbReference type="SMART" id="SM00958">
    <property type="entry name" value="SecA_PP_bind"/>
    <property type="match status" value="1"/>
</dbReference>
<dbReference type="SUPFAM" id="SSF81886">
    <property type="entry name" value="Helical scaffold and wing domains of SecA"/>
    <property type="match status" value="1"/>
</dbReference>
<dbReference type="SUPFAM" id="SSF52540">
    <property type="entry name" value="P-loop containing nucleoside triphosphate hydrolases"/>
    <property type="match status" value="2"/>
</dbReference>
<dbReference type="SUPFAM" id="SSF81767">
    <property type="entry name" value="Pre-protein crosslinking domain of SecA"/>
    <property type="match status" value="1"/>
</dbReference>
<dbReference type="PROSITE" id="PS01312">
    <property type="entry name" value="SECA"/>
    <property type="match status" value="1"/>
</dbReference>
<dbReference type="PROSITE" id="PS51196">
    <property type="entry name" value="SECA_MOTOR_DEAD"/>
    <property type="match status" value="1"/>
</dbReference>
<name>SECA_ECO57</name>
<feature type="chain" id="PRO_0000320806" description="Protein translocase subunit SecA">
    <location>
        <begin position="1"/>
        <end position="901"/>
    </location>
</feature>
<feature type="region of interest" description="Disordered" evidence="2">
    <location>
        <begin position="859"/>
        <end position="901"/>
    </location>
</feature>
<feature type="compositionally biased region" description="Basic residues" evidence="2">
    <location>
        <begin position="891"/>
        <end position="901"/>
    </location>
</feature>
<feature type="binding site" evidence="1">
    <location>
        <position position="87"/>
    </location>
    <ligand>
        <name>ATP</name>
        <dbReference type="ChEBI" id="CHEBI:30616"/>
    </ligand>
</feature>
<feature type="binding site" evidence="1">
    <location>
        <begin position="105"/>
        <end position="109"/>
    </location>
    <ligand>
        <name>ATP</name>
        <dbReference type="ChEBI" id="CHEBI:30616"/>
    </ligand>
</feature>
<feature type="binding site" evidence="1">
    <location>
        <position position="512"/>
    </location>
    <ligand>
        <name>ATP</name>
        <dbReference type="ChEBI" id="CHEBI:30616"/>
    </ligand>
</feature>
<feature type="binding site" evidence="1">
    <location>
        <position position="885"/>
    </location>
    <ligand>
        <name>Zn(2+)</name>
        <dbReference type="ChEBI" id="CHEBI:29105"/>
    </ligand>
</feature>
<feature type="binding site" evidence="1">
    <location>
        <position position="887"/>
    </location>
    <ligand>
        <name>Zn(2+)</name>
        <dbReference type="ChEBI" id="CHEBI:29105"/>
    </ligand>
</feature>
<feature type="binding site" evidence="1">
    <location>
        <position position="896"/>
    </location>
    <ligand>
        <name>Zn(2+)</name>
        <dbReference type="ChEBI" id="CHEBI:29105"/>
    </ligand>
</feature>
<feature type="binding site" evidence="1">
    <location>
        <position position="897"/>
    </location>
    <ligand>
        <name>Zn(2+)</name>
        <dbReference type="ChEBI" id="CHEBI:29105"/>
    </ligand>
</feature>
<keyword id="KW-0067">ATP-binding</keyword>
<keyword id="KW-0997">Cell inner membrane</keyword>
<keyword id="KW-1003">Cell membrane</keyword>
<keyword id="KW-0963">Cytoplasm</keyword>
<keyword id="KW-0472">Membrane</keyword>
<keyword id="KW-0479">Metal-binding</keyword>
<keyword id="KW-0547">Nucleotide-binding</keyword>
<keyword id="KW-0653">Protein transport</keyword>
<keyword id="KW-1185">Reference proteome</keyword>
<keyword id="KW-1278">Translocase</keyword>
<keyword id="KW-0811">Translocation</keyword>
<keyword id="KW-0813">Transport</keyword>
<keyword id="KW-0862">Zinc</keyword>
<reference key="1">
    <citation type="journal article" date="2001" name="Nature">
        <title>Genome sequence of enterohaemorrhagic Escherichia coli O157:H7.</title>
        <authorList>
            <person name="Perna N.T."/>
            <person name="Plunkett G. III"/>
            <person name="Burland V."/>
            <person name="Mau B."/>
            <person name="Glasner J.D."/>
            <person name="Rose D.J."/>
            <person name="Mayhew G.F."/>
            <person name="Evans P.S."/>
            <person name="Gregor J."/>
            <person name="Kirkpatrick H.A."/>
            <person name="Posfai G."/>
            <person name="Hackett J."/>
            <person name="Klink S."/>
            <person name="Boutin A."/>
            <person name="Shao Y."/>
            <person name="Miller L."/>
            <person name="Grotbeck E.J."/>
            <person name="Davis N.W."/>
            <person name="Lim A."/>
            <person name="Dimalanta E.T."/>
            <person name="Potamousis K."/>
            <person name="Apodaca J."/>
            <person name="Anantharaman T.S."/>
            <person name="Lin J."/>
            <person name="Yen G."/>
            <person name="Schwartz D.C."/>
            <person name="Welch R.A."/>
            <person name="Blattner F.R."/>
        </authorList>
    </citation>
    <scope>NUCLEOTIDE SEQUENCE [LARGE SCALE GENOMIC DNA]</scope>
    <source>
        <strain>O157:H7 / EDL933 / ATCC 700927 / EHEC</strain>
    </source>
</reference>
<reference key="2">
    <citation type="journal article" date="2001" name="DNA Res.">
        <title>Complete genome sequence of enterohemorrhagic Escherichia coli O157:H7 and genomic comparison with a laboratory strain K-12.</title>
        <authorList>
            <person name="Hayashi T."/>
            <person name="Makino K."/>
            <person name="Ohnishi M."/>
            <person name="Kurokawa K."/>
            <person name="Ishii K."/>
            <person name="Yokoyama K."/>
            <person name="Han C.-G."/>
            <person name="Ohtsubo E."/>
            <person name="Nakayama K."/>
            <person name="Murata T."/>
            <person name="Tanaka M."/>
            <person name="Tobe T."/>
            <person name="Iida T."/>
            <person name="Takami H."/>
            <person name="Honda T."/>
            <person name="Sasakawa C."/>
            <person name="Ogasawara N."/>
            <person name="Yasunaga T."/>
            <person name="Kuhara S."/>
            <person name="Shiba T."/>
            <person name="Hattori M."/>
            <person name="Shinagawa H."/>
        </authorList>
    </citation>
    <scope>NUCLEOTIDE SEQUENCE [LARGE SCALE GENOMIC DNA]</scope>
    <source>
        <strain>O157:H7 / Sakai / RIMD 0509952 / EHEC</strain>
    </source>
</reference>
<accession>Q8X996</accession>
<accession>Q7AHQ9</accession>
<proteinExistence type="inferred from homology"/>
<protein>
    <recommendedName>
        <fullName evidence="1">Protein translocase subunit SecA</fullName>
        <ecNumber evidence="1">7.4.2.8</ecNumber>
    </recommendedName>
</protein>
<gene>
    <name evidence="1" type="primary">secA</name>
    <name type="ordered locus">Z0108</name>
    <name type="ordered locus">ECs0102</name>
</gene>
<organism>
    <name type="scientific">Escherichia coli O157:H7</name>
    <dbReference type="NCBI Taxonomy" id="83334"/>
    <lineage>
        <taxon>Bacteria</taxon>
        <taxon>Pseudomonadati</taxon>
        <taxon>Pseudomonadota</taxon>
        <taxon>Gammaproteobacteria</taxon>
        <taxon>Enterobacterales</taxon>
        <taxon>Enterobacteriaceae</taxon>
        <taxon>Escherichia</taxon>
    </lineage>
</organism>
<sequence length="901" mass="101965">MLIKLLTKVFGSRNDRTLRRMRKVVNIINAMEPEMEKLSDEELKGKTAEFRARLEKGEVLENLIPEAFAVVREASKRVFGMRHFDVQLLGGMVLNERCIAEMRTGEGKTLTATLPAYLNALTGKGVHVVTVNDYLAQRDAENNRPLFEFLGLTVGINLPGMPAPAKREAYAADITYGTNNEYGFDYLRDNMAFSPEERVQRKLHYALVDEVDSILIDEARTPLIISGPAEDSSEMYKRVNKIIPHLIRQEKEDSETFQGEGHFSVDEKSRQVNLTERGLVLIEELLVKEGIMDEGESLYSPANIMLMHHVTAALRAHALFTRDVDYIVKDGEVIIVDEHTGRTMQGRRWSDGLHQAVEAKEGVQIQNENQTLASITFQNYFRLYEKLAGMTGTADTEAFEFSSIYKLDTVVVPTNRPMIRKDLPDLVYMTEAEKIQAIIEDIKERTAKGQPVLVGTISIEKSELVSNELTKAGIKHNVLNAKFHANEAAIVAQAGYPAAVTIATNMAGRGTDIVLGGSWQAEVAALENPTAEQIEKIKADWQVRHDAVLAAGGLHIIGTERHESRRIDNQLRGRSGRQGDAGSSRFYLSMEDALMRIFASDRVSGMMRKLGMKPGEAIEHPWVTKAIANAQRKVESRNFDIRKQLLEYDDVANDQRRAIYSQRNELLDVSDVSETINSIREDVFKATIDAYIPPQSLEEMWDIPGLQERLKNDFDLDLPIAEWLDKEPELHEETLRERILAQSIEVYQRKEEVVGAEMMRHFEKGVMLQTLDSLWKEHLAAMDYLRQGIHLRGYAQKDPKQEYKRESFSMFAAMLESLKYEVISTLSKVQVRMPEEVEELEQQRRMEAERLAQMQQLSHQDDDSAAAAALAAQTGERKVGRNDPCPCGSGKKYKQCHGRLQ</sequence>